<accession>B3DU18</accession>
<sequence>MISIIIQILLISVSVAMDAFAVSIGKGLTVSRVRVQDAVKSTLWFGGFQMLFPILGYFAASTFSKYVTQFDHWIIFALLVFIGGNMVHEAFEEDEENSKETAQFDWKHMLPLAVACSIDAFAVGVSLAFMFTKAHMAFAILSIGVVTGLFSAAGLHIGRAFGSRWQKPAQIAGGVVLILLGIKVLLEHLGVIAF</sequence>
<evidence type="ECO:0000255" key="1">
    <source>
        <dbReference type="HAMAP-Rule" id="MF_01521"/>
    </source>
</evidence>
<reference key="1">
    <citation type="journal article" date="2008" name="BMC Genomics">
        <title>Comparative genomic analysis of the gut bacterium Bifidobacterium longum reveals loci susceptible to deletion during pure culture growth.</title>
        <authorList>
            <person name="Lee J.H."/>
            <person name="Karamychev V.N."/>
            <person name="Kozyavkin S.A."/>
            <person name="Mills D."/>
            <person name="Pavlov A.R."/>
            <person name="Pavlova N.V."/>
            <person name="Polouchine N.N."/>
            <person name="Richardson P.M."/>
            <person name="Shakhova V.V."/>
            <person name="Slesarev A.I."/>
            <person name="Weimer B."/>
            <person name="O'Sullivan D.J."/>
        </authorList>
    </citation>
    <scope>NUCLEOTIDE SEQUENCE [LARGE SCALE GENOMIC DNA]</scope>
    <source>
        <strain>DJO10A</strain>
    </source>
</reference>
<comment type="function">
    <text evidence="1">Probably functions as a manganese efflux pump.</text>
</comment>
<comment type="subcellular location">
    <subcellularLocation>
        <location evidence="1">Cell membrane</location>
        <topology evidence="1">Multi-pass membrane protein</topology>
    </subcellularLocation>
</comment>
<comment type="similarity">
    <text evidence="1">Belongs to the MntP (TC 9.B.29) family.</text>
</comment>
<protein>
    <recommendedName>
        <fullName evidence="1">Putative manganese efflux pump MntP</fullName>
    </recommendedName>
</protein>
<feature type="chain" id="PRO_1000200014" description="Putative manganese efflux pump MntP">
    <location>
        <begin position="1"/>
        <end position="194"/>
    </location>
</feature>
<feature type="transmembrane region" description="Helical" evidence="1">
    <location>
        <begin position="2"/>
        <end position="22"/>
    </location>
</feature>
<feature type="transmembrane region" description="Helical" evidence="1">
    <location>
        <begin position="43"/>
        <end position="63"/>
    </location>
</feature>
<feature type="transmembrane region" description="Helical" evidence="1">
    <location>
        <begin position="67"/>
        <end position="87"/>
    </location>
</feature>
<feature type="transmembrane region" description="Helical" evidence="1">
    <location>
        <begin position="111"/>
        <end position="131"/>
    </location>
</feature>
<feature type="transmembrane region" description="Helical" evidence="1">
    <location>
        <begin position="137"/>
        <end position="157"/>
    </location>
</feature>
<feature type="transmembrane region" description="Helical" evidence="1">
    <location>
        <begin position="174"/>
        <end position="194"/>
    </location>
</feature>
<organism>
    <name type="scientific">Bifidobacterium longum (strain DJO10A)</name>
    <dbReference type="NCBI Taxonomy" id="205913"/>
    <lineage>
        <taxon>Bacteria</taxon>
        <taxon>Bacillati</taxon>
        <taxon>Actinomycetota</taxon>
        <taxon>Actinomycetes</taxon>
        <taxon>Bifidobacteriales</taxon>
        <taxon>Bifidobacteriaceae</taxon>
        <taxon>Bifidobacterium</taxon>
    </lineage>
</organism>
<dbReference type="EMBL" id="CP000605">
    <property type="protein sequence ID" value="ACD98637.1"/>
    <property type="molecule type" value="Genomic_DNA"/>
</dbReference>
<dbReference type="RefSeq" id="WP_007051517.1">
    <property type="nucleotide sequence ID" value="NZ_AABM02000005.1"/>
</dbReference>
<dbReference type="KEGG" id="blj:BLD_1192"/>
<dbReference type="HOGENOM" id="CLU_096410_3_0_11"/>
<dbReference type="Proteomes" id="UP000002419">
    <property type="component" value="Chromosome"/>
</dbReference>
<dbReference type="GO" id="GO:0005886">
    <property type="term" value="C:plasma membrane"/>
    <property type="evidence" value="ECO:0007669"/>
    <property type="project" value="UniProtKB-SubCell"/>
</dbReference>
<dbReference type="GO" id="GO:0005384">
    <property type="term" value="F:manganese ion transmembrane transporter activity"/>
    <property type="evidence" value="ECO:0007669"/>
    <property type="project" value="UniProtKB-UniRule"/>
</dbReference>
<dbReference type="HAMAP" id="MF_01521">
    <property type="entry name" value="MntP_pump"/>
    <property type="match status" value="1"/>
</dbReference>
<dbReference type="InterPro" id="IPR003810">
    <property type="entry name" value="Mntp/YtaF"/>
</dbReference>
<dbReference type="InterPro" id="IPR022929">
    <property type="entry name" value="Put_MntP"/>
</dbReference>
<dbReference type="PANTHER" id="PTHR35529">
    <property type="entry name" value="MANGANESE EFFLUX PUMP MNTP-RELATED"/>
    <property type="match status" value="1"/>
</dbReference>
<dbReference type="PANTHER" id="PTHR35529:SF1">
    <property type="entry name" value="MANGANESE EFFLUX PUMP MNTP-RELATED"/>
    <property type="match status" value="1"/>
</dbReference>
<dbReference type="Pfam" id="PF02659">
    <property type="entry name" value="Mntp"/>
    <property type="match status" value="1"/>
</dbReference>
<name>MNTP_BIFLD</name>
<gene>
    <name evidence="1" type="primary">mntP</name>
    <name type="ordered locus">BLD_1192</name>
</gene>
<keyword id="KW-1003">Cell membrane</keyword>
<keyword id="KW-0406">Ion transport</keyword>
<keyword id="KW-0464">Manganese</keyword>
<keyword id="KW-0472">Membrane</keyword>
<keyword id="KW-0812">Transmembrane</keyword>
<keyword id="KW-1133">Transmembrane helix</keyword>
<keyword id="KW-0813">Transport</keyword>
<proteinExistence type="inferred from homology"/>